<dbReference type="EMBL" id="M59763">
    <property type="protein sequence ID" value="AAA98080.1"/>
    <property type="molecule type" value="Genomic_DNA"/>
</dbReference>
<dbReference type="EMBL" id="U01159">
    <property type="protein sequence ID" value="AAC44185.1"/>
    <property type="molecule type" value="Genomic_DNA"/>
</dbReference>
<dbReference type="EMBL" id="AP001918">
    <property type="protein sequence ID" value="BAA97968.1"/>
    <property type="molecule type" value="Genomic_DNA"/>
</dbReference>
<dbReference type="EMBL" id="M24492">
    <property type="protein sequence ID" value="AAA98094.1"/>
    <property type="molecule type" value="Genomic_DNA"/>
</dbReference>
<dbReference type="PIR" id="S20479">
    <property type="entry name" value="BVECTH"/>
</dbReference>
<dbReference type="RefSeq" id="NP_061477.1">
    <property type="nucleotide sequence ID" value="NC_002483.1"/>
</dbReference>
<dbReference type="RefSeq" id="NP_862943.1">
    <property type="nucleotide sequence ID" value="NC_004998.1"/>
</dbReference>
<dbReference type="RefSeq" id="YP_009060136.1">
    <property type="nucleotide sequence ID" value="NC_024956.1"/>
</dbReference>
<dbReference type="RefSeq" id="YP_009068325.1">
    <property type="nucleotide sequence ID" value="NC_025139.1"/>
</dbReference>
<dbReference type="RefSeq" id="YP_009070590.1">
    <property type="nucleotide sequence ID" value="NC_025175.1"/>
</dbReference>
<dbReference type="SMR" id="P15069"/>
<dbReference type="DIP" id="DIP-28105N"/>
<dbReference type="KEGG" id="ecoc:C3026_24590"/>
<dbReference type="PATRIC" id="fig|83333.107.peg.614"/>
<dbReference type="OrthoDB" id="9797479at2"/>
<dbReference type="PRO" id="PR:P15069"/>
<dbReference type="GO" id="GO:0042597">
    <property type="term" value="C:periplasmic space"/>
    <property type="evidence" value="ECO:0007669"/>
    <property type="project" value="UniProtKB-SubCell"/>
</dbReference>
<dbReference type="InterPro" id="IPR010927">
    <property type="entry name" value="T4SS_TraH"/>
</dbReference>
<dbReference type="NCBIfam" id="NF010279">
    <property type="entry name" value="PRK13723.1"/>
    <property type="match status" value="1"/>
</dbReference>
<dbReference type="Pfam" id="PF06122">
    <property type="entry name" value="TraH"/>
    <property type="match status" value="1"/>
</dbReference>
<gene>
    <name type="primary">traH</name>
    <name type="ordered locus">ECOK12F098</name>
</gene>
<evidence type="ECO:0000255" key="1"/>
<evidence type="ECO:0000305" key="2"/>
<protein>
    <recommendedName>
        <fullName>Protein TraH</fullName>
    </recommendedName>
</protein>
<geneLocation type="plasmid">
    <name>F</name>
</geneLocation>
<reference key="1">
    <citation type="journal article" date="1992" name="Mol. Gen. Genet.">
        <title>Characterization of the F plasmid bifunctional conjugation gene, traG.</title>
        <authorList>
            <person name="Firth N."/>
            <person name="Skurray R.A."/>
        </authorList>
    </citation>
    <scope>NUCLEOTIDE SEQUENCE [GENOMIC DNA]</scope>
    <source>
        <strain>K12</strain>
    </source>
</reference>
<reference key="2">
    <citation type="journal article" date="1994" name="Microbiol. Rev.">
        <title>Analysis of the sequence and gene products of the transfer region of the F sex factor.</title>
        <authorList>
            <person name="Frost L.S."/>
            <person name="Ippen-Ihler K."/>
            <person name="Skurray R.A."/>
        </authorList>
    </citation>
    <scope>NUCLEOTIDE SEQUENCE [GENOMIC DNA]</scope>
</reference>
<reference key="3">
    <citation type="submission" date="2000-04" db="EMBL/GenBank/DDBJ databases">
        <title>Complete nucleotide sequence of the F plasmid: its implications for organization and diversification of plasmid genomes.</title>
        <authorList>
            <person name="Shimizu H."/>
            <person name="Saitoh Y."/>
            <person name="Suda Y."/>
            <person name="Uehara K."/>
            <person name="Sampei G."/>
            <person name="Mizobuchi K."/>
        </authorList>
    </citation>
    <scope>NUCLEOTIDE SEQUENCE [LARGE SCALE GENOMIC DNA]</scope>
    <source>
        <strain>K12 / CR63</strain>
    </source>
</reference>
<reference key="4">
    <citation type="journal article" date="1989" name="Gene">
        <title>Nucleotide sequence of the F plasmid transfer gene, traH: identification of a new gene and a promoter within the transfer operon.</title>
        <authorList>
            <person name="Ham L.M."/>
            <person name="Firth N."/>
            <person name="Skurray R.A."/>
        </authorList>
    </citation>
    <scope>NUCLEOTIDE SEQUENCE [GENOMIC DNA] OF 1-359</scope>
    <source>
        <strain>K12</strain>
    </source>
</reference>
<feature type="signal peptide" evidence="1">
    <location>
        <begin position="1"/>
        <end position="24"/>
    </location>
</feature>
<feature type="chain" id="PRO_0000024503" description="Protein TraH">
    <location>
        <begin position="25"/>
        <end position="458"/>
    </location>
</feature>
<feature type="sequence conflict" description="In Ref. 4; AAA98094." evidence="2" ref="4">
    <original>N</original>
    <variation>S</variation>
    <location>
        <position position="254"/>
    </location>
</feature>
<feature type="sequence conflict" description="In Ref. 4; AAA98094." evidence="2" ref="4">
    <original>T</original>
    <variation>S</variation>
    <location>
        <position position="265"/>
    </location>
</feature>
<feature type="sequence conflict" description="In Ref. 4; AAA98094." evidence="2" ref="4">
    <original>I</original>
    <variation>F</variation>
    <location>
        <position position="269"/>
    </location>
</feature>
<feature type="sequence conflict" description="In Ref. 4; AAA98094." evidence="2" ref="4">
    <original>K</original>
    <variation>R</variation>
    <location>
        <position position="321"/>
    </location>
</feature>
<feature type="sequence conflict" description="In Ref. 4; AAA98094." evidence="2" ref="4">
    <original>S</original>
    <variation>N</variation>
    <location>
        <position position="338"/>
    </location>
</feature>
<feature type="sequence conflict" description="In Ref. 4." evidence="2" ref="4">
    <original>DPQMLGVSNSM</original>
    <variation>LTRRCSVFPAV</variation>
    <location>
        <begin position="349"/>
        <end position="359"/>
    </location>
</feature>
<organism>
    <name type="scientific">Escherichia coli (strain K12)</name>
    <dbReference type="NCBI Taxonomy" id="83333"/>
    <lineage>
        <taxon>Bacteria</taxon>
        <taxon>Pseudomonadati</taxon>
        <taxon>Pseudomonadota</taxon>
        <taxon>Gammaproteobacteria</taxon>
        <taxon>Enterobacterales</taxon>
        <taxon>Enterobacteriaceae</taxon>
        <taxon>Escherichia</taxon>
    </lineage>
</organism>
<accession>P15069</accession>
<proteinExistence type="inferred from homology"/>
<keyword id="KW-0184">Conjugation</keyword>
<keyword id="KW-0574">Periplasm</keyword>
<keyword id="KW-0614">Plasmid</keyword>
<keyword id="KW-0732">Signal</keyword>
<comment type="function">
    <text>Involved in pilus assembly.</text>
</comment>
<comment type="subcellular location">
    <subcellularLocation>
        <location>Periplasm</location>
    </subcellularLocation>
</comment>
<sequence>MMPRIKPLLVLCAALLTVTPAASADVNSDMNQFFNKLGFASNTTQPGVWQGQAAGYAYGGSLYARTQVKNVQLISMTLPDINAGCGGIDAYLGSFSFINGEQLQRFVKQIMSNAAGYFFDLALQTTVPEIKTAKDFLQKMASDINSMNLSSCQAAQGIIGGLFPRTQVSQQKVCQDIAGESNIFADWAASRQGCTVGGKSDSVRDKASDKDKERVTKNINIMWNALSKNRMFDGNKELKEFVMTLTGSLVFGPNGEITPLSARTTDRSIIRAMMEGGTAKISHCNDSDKCLKVVADTPVTISRDNALKSQITKLLASIQNKAVSDTPLDDKEKGFISSTTIPVFKYLVDPQMLGVSNSMIYQLTDYIGYDILLQYIQELIQQARAMVATGNYDEAVIGHINDNMNDATRQIAAFQSQVQVQQDALLVVDRQMSYMRQQLSARMLSRYQNNYHFGGSTL</sequence>
<name>TRAH1_ECOLI</name>